<sequence>MADREGGCAAGRGRELEPELEPGPGPGSALEPGEEFEIVDRSQLPGPGDLRSATRPRAAEGWSAPILTLARRATGNLSASCGSALRAAAGLGGGDSGDGTARAASKCQMMEERANLMHMMKLSIKVLLQSALSLGRSLDADHAPLQQFFVVMEHCLKHGLKVKKSFIGQNKSFFGPLELVEKLCPEASDIATSVRNLPELKTAVGRGRAWLYLALMQKKLADYLKVLIDNKHLLSEFYEPEALMMEEEGMVIVGLLVGLNVLDANLCLKGEDLDSQVGVIDFSLYLKDVQDLDGGKEHERITDVLDQKNYVEELNRHLSCTVGDLQTKIDGLEKTNSKLQEELSAATDRICSLQEEQQQLREQNELIRERSEKSVEITKQDTKVELETYKQTRQGLDEMYSDVWKQLKEEKKVRLELEKELELQIGMKTEMEIAMKLLEKDTHEKQDTLVALRQQLEEVKAINLQMFHKAQNAESSLQQKNEAITSFEGKTNQVMSSMKQMEERLQHSERARQGAEERSHKLQQELGGRIGALQLQLSQLHEQCSSLEKELKSEKEQRQALQRELQHEKDTSSLLRMELQQVEGLKKELRELQDEKAELQKICEEQEQALQEMGLHLSQSKLKMEDIKEVNQALKGHAWLKDDEATHCRQCEKEFSISRRKHHCRNCGHIFCNTCSSNELALPSYPKPVRVCDSCHTLLLQRCSSTAS</sequence>
<feature type="chain" id="PRO_0000097530" description="RUN and FYVE domain-containing protein 1">
    <location>
        <begin position="1"/>
        <end position="708"/>
    </location>
</feature>
<feature type="domain" description="RUN" evidence="4">
    <location>
        <begin position="139"/>
        <end position="271"/>
    </location>
</feature>
<feature type="zinc finger region" description="FYVE-type" evidence="3">
    <location>
        <begin position="642"/>
        <end position="700"/>
    </location>
</feature>
<feature type="region of interest" description="Disordered" evidence="5">
    <location>
        <begin position="1"/>
        <end position="57"/>
    </location>
</feature>
<feature type="region of interest" description="Disordered" evidence="5">
    <location>
        <begin position="493"/>
        <end position="522"/>
    </location>
</feature>
<feature type="region of interest" description="Interaction with RAB4" evidence="10">
    <location>
        <begin position="615"/>
        <end position="625"/>
    </location>
</feature>
<feature type="coiled-coil region" evidence="2">
    <location>
        <begin position="321"/>
        <end position="374"/>
    </location>
</feature>
<feature type="coiled-coil region" evidence="2">
    <location>
        <begin position="405"/>
        <end position="617"/>
    </location>
</feature>
<feature type="compositionally biased region" description="Basic and acidic residues" evidence="5">
    <location>
        <begin position="1"/>
        <end position="17"/>
    </location>
</feature>
<feature type="compositionally biased region" description="Basic and acidic residues" evidence="5">
    <location>
        <begin position="500"/>
        <end position="522"/>
    </location>
</feature>
<feature type="binding site" evidence="3">
    <location>
        <position position="648"/>
    </location>
    <ligand>
        <name>Zn(2+)</name>
        <dbReference type="ChEBI" id="CHEBI:29105"/>
        <label>1</label>
    </ligand>
</feature>
<feature type="binding site" evidence="3">
    <location>
        <position position="651"/>
    </location>
    <ligand>
        <name>Zn(2+)</name>
        <dbReference type="ChEBI" id="CHEBI:29105"/>
        <label>1</label>
    </ligand>
</feature>
<feature type="binding site" evidence="3">
    <location>
        <position position="664"/>
    </location>
    <ligand>
        <name>Zn(2+)</name>
        <dbReference type="ChEBI" id="CHEBI:29105"/>
        <label>2</label>
    </ligand>
</feature>
<feature type="binding site" evidence="3">
    <location>
        <position position="667"/>
    </location>
    <ligand>
        <name>Zn(2+)</name>
        <dbReference type="ChEBI" id="CHEBI:29105"/>
        <label>2</label>
    </ligand>
</feature>
<feature type="binding site" evidence="3">
    <location>
        <position position="672"/>
    </location>
    <ligand>
        <name>Zn(2+)</name>
        <dbReference type="ChEBI" id="CHEBI:29105"/>
        <label>1</label>
    </ligand>
</feature>
<feature type="binding site" evidence="3">
    <location>
        <position position="675"/>
    </location>
    <ligand>
        <name>Zn(2+)</name>
        <dbReference type="ChEBI" id="CHEBI:29105"/>
        <label>1</label>
    </ligand>
</feature>
<feature type="binding site" evidence="3">
    <location>
        <position position="692"/>
    </location>
    <ligand>
        <name>Zn(2+)</name>
        <dbReference type="ChEBI" id="CHEBI:29105"/>
        <label>2</label>
    </ligand>
</feature>
<feature type="binding site" evidence="3">
    <location>
        <position position="695"/>
    </location>
    <ligand>
        <name>Zn(2+)</name>
        <dbReference type="ChEBI" id="CHEBI:29105"/>
        <label>2</label>
    </ligand>
</feature>
<feature type="modified residue" description="Phosphotyrosine" evidence="6">
    <location>
        <position position="389"/>
    </location>
</feature>
<feature type="modified residue" description="Phosphotyrosine" evidence="6">
    <location>
        <position position="400"/>
    </location>
</feature>
<feature type="modified residue" description="Phosphoserine" evidence="17">
    <location>
        <position position="620"/>
    </location>
</feature>
<feature type="splice variant" id="VSP_019785" description="In isoform 2." evidence="12 13">
    <location>
        <begin position="1"/>
        <end position="108"/>
    </location>
</feature>
<feature type="splice variant" id="VSP_019786" description="In isoform 3." evidence="14">
    <original>LSAATDRICSLQEEQQQLREQNELIRERSEKSVEITKQDTKVELETYKQTRQGLDEMYSDVWKQLKEEKK</original>
    <variation>EERMKGQDKGGLSRGRELAASCPAVSLLDTSCLLLAGGGCSALLRLSTAFSCNRPNLLTSRRTAAVKRTK</variation>
    <location>
        <begin position="343"/>
        <end position="412"/>
    </location>
</feature>
<feature type="splice variant" id="VSP_019787" description="In isoform 3." evidence="14">
    <location>
        <begin position="413"/>
        <end position="708"/>
    </location>
</feature>
<feature type="sequence variant" id="VAR_035985" description="In a breast cancer sample; somatic mutation." evidence="8">
    <original>C</original>
    <variation>F</variation>
    <location>
        <position position="267"/>
    </location>
</feature>
<feature type="sequence variant" id="VAR_051327" description="In dbSNP:rs6879322.">
    <original>H</original>
    <variation>Q</variation>
    <location>
        <position position="298"/>
    </location>
</feature>
<feature type="mutagenesis site" description="Abolishes phosphorylation and endosomal targeting; when associated with F-400." evidence="6">
    <original>Y</original>
    <variation>F</variation>
    <location>
        <position position="389"/>
    </location>
</feature>
<feature type="mutagenesis site" description="Abolishes phosphorylation and endosomal targeting; when associated with F-389." evidence="6">
    <original>Y</original>
    <variation>F</variation>
    <location>
        <position position="400"/>
    </location>
</feature>
<feature type="sequence conflict" description="In Ref. 1; AAQ14554." evidence="15" ref="1">
    <original>SHKLQQELGG</original>
    <variation>TTSCSRSWAV</variation>
    <location>
        <begin position="519"/>
        <end position="528"/>
    </location>
</feature>
<feature type="sequence conflict" description="In Ref. 1; AAQ14554." evidence="15" ref="1">
    <original>D</original>
    <variation>N</variation>
    <location>
        <position position="570"/>
    </location>
</feature>
<feature type="turn" evidence="19">
    <location>
        <begin position="649"/>
        <end position="651"/>
    </location>
</feature>
<feature type="strand" evidence="18">
    <location>
        <begin position="657"/>
        <end position="659"/>
    </location>
</feature>
<feature type="strand" evidence="18">
    <location>
        <begin position="661"/>
        <end position="663"/>
    </location>
</feature>
<feature type="turn" evidence="19">
    <location>
        <begin position="665"/>
        <end position="667"/>
    </location>
</feature>
<feature type="strand" evidence="18">
    <location>
        <begin position="670"/>
        <end position="672"/>
    </location>
</feature>
<feature type="helix" evidence="19">
    <location>
        <begin position="674"/>
        <end position="676"/>
    </location>
</feature>
<feature type="strand" evidence="19">
    <location>
        <begin position="678"/>
        <end position="680"/>
    </location>
</feature>
<feature type="strand" evidence="18">
    <location>
        <begin position="683"/>
        <end position="687"/>
    </location>
</feature>
<feature type="strand" evidence="19">
    <location>
        <begin position="689"/>
        <end position="691"/>
    </location>
</feature>
<feature type="helix" evidence="19">
    <location>
        <begin position="693"/>
        <end position="698"/>
    </location>
</feature>
<proteinExistence type="evidence at protein level"/>
<gene>
    <name evidence="16" type="primary">RUFY1</name>
    <name type="synonym">RABIP4</name>
    <name type="synonym">ZFYVE12</name>
</gene>
<keyword id="KW-0002">3D-structure</keyword>
<keyword id="KW-0025">Alternative splicing</keyword>
<keyword id="KW-0175">Coiled coil</keyword>
<keyword id="KW-0254">Endocytosis</keyword>
<keyword id="KW-0967">Endosome</keyword>
<keyword id="KW-0446">Lipid-binding</keyword>
<keyword id="KW-0472">Membrane</keyword>
<keyword id="KW-0479">Metal-binding</keyword>
<keyword id="KW-0597">Phosphoprotein</keyword>
<keyword id="KW-0653">Protein transport</keyword>
<keyword id="KW-1267">Proteomics identification</keyword>
<keyword id="KW-1185">Reference proteome</keyword>
<keyword id="KW-0813">Transport</keyword>
<keyword id="KW-0862">Zinc</keyword>
<keyword id="KW-0863">Zinc-finger</keyword>
<accession>Q96T51</accession>
<accession>Q59FF3</accession>
<accession>Q71S93</accession>
<accession>Q9H6I3</accession>
<reference key="1">
    <citation type="journal article" date="2004" name="Mol. Biol. Cell">
        <title>Rabip4' is an effector of rab5 and rab4 and regulates transport through early endosomes.</title>
        <authorList>
            <person name="Fouraux M.A."/>
            <person name="Deneka M."/>
            <person name="Ivan V."/>
            <person name="van der Heijden A."/>
            <person name="Raymackers J."/>
            <person name="van Suylekom D."/>
            <person name="van Venrooij W.J."/>
            <person name="van der Sluijs P."/>
            <person name="Pruijn G.J.M."/>
        </authorList>
    </citation>
    <scope>NUCLEOTIDE SEQUENCE [MRNA] (ISOFORM 1)</scope>
    <scope>INTERACTION WITH SSB; RAB4 AND RAB5</scope>
    <scope>IDENTIFICATION BY MASS SPECTROMETRY</scope>
    <scope>SUBCELLULAR LOCATION</scope>
    <scope>FUNCTION</scope>
</reference>
<reference key="2">
    <citation type="journal article" date="2004" name="Nat. Genet.">
        <title>Complete sequencing and characterization of 21,243 full-length human cDNAs.</title>
        <authorList>
            <person name="Ota T."/>
            <person name="Suzuki Y."/>
            <person name="Nishikawa T."/>
            <person name="Otsuki T."/>
            <person name="Sugiyama T."/>
            <person name="Irie R."/>
            <person name="Wakamatsu A."/>
            <person name="Hayashi K."/>
            <person name="Sato H."/>
            <person name="Nagai K."/>
            <person name="Kimura K."/>
            <person name="Makita H."/>
            <person name="Sekine M."/>
            <person name="Obayashi M."/>
            <person name="Nishi T."/>
            <person name="Shibahara T."/>
            <person name="Tanaka T."/>
            <person name="Ishii S."/>
            <person name="Yamamoto J."/>
            <person name="Saito K."/>
            <person name="Kawai Y."/>
            <person name="Isono Y."/>
            <person name="Nakamura Y."/>
            <person name="Nagahari K."/>
            <person name="Murakami K."/>
            <person name="Yasuda T."/>
            <person name="Iwayanagi T."/>
            <person name="Wagatsuma M."/>
            <person name="Shiratori A."/>
            <person name="Sudo H."/>
            <person name="Hosoiri T."/>
            <person name="Kaku Y."/>
            <person name="Kodaira H."/>
            <person name="Kondo H."/>
            <person name="Sugawara M."/>
            <person name="Takahashi M."/>
            <person name="Kanda K."/>
            <person name="Yokoi T."/>
            <person name="Furuya T."/>
            <person name="Kikkawa E."/>
            <person name="Omura Y."/>
            <person name="Abe K."/>
            <person name="Kamihara K."/>
            <person name="Katsuta N."/>
            <person name="Sato K."/>
            <person name="Tanikawa M."/>
            <person name="Yamazaki M."/>
            <person name="Ninomiya K."/>
            <person name="Ishibashi T."/>
            <person name="Yamashita H."/>
            <person name="Murakawa K."/>
            <person name="Fujimori K."/>
            <person name="Tanai H."/>
            <person name="Kimata M."/>
            <person name="Watanabe M."/>
            <person name="Hiraoka S."/>
            <person name="Chiba Y."/>
            <person name="Ishida S."/>
            <person name="Ono Y."/>
            <person name="Takiguchi S."/>
            <person name="Watanabe S."/>
            <person name="Yosida M."/>
            <person name="Hotuta T."/>
            <person name="Kusano J."/>
            <person name="Kanehori K."/>
            <person name="Takahashi-Fujii A."/>
            <person name="Hara H."/>
            <person name="Tanase T.-O."/>
            <person name="Nomura Y."/>
            <person name="Togiya S."/>
            <person name="Komai F."/>
            <person name="Hara R."/>
            <person name="Takeuchi K."/>
            <person name="Arita M."/>
            <person name="Imose N."/>
            <person name="Musashino K."/>
            <person name="Yuuki H."/>
            <person name="Oshima A."/>
            <person name="Sasaki N."/>
            <person name="Aotsuka S."/>
            <person name="Yoshikawa Y."/>
            <person name="Matsunawa H."/>
            <person name="Ichihara T."/>
            <person name="Shiohata N."/>
            <person name="Sano S."/>
            <person name="Moriya S."/>
            <person name="Momiyama H."/>
            <person name="Satoh N."/>
            <person name="Takami S."/>
            <person name="Terashima Y."/>
            <person name="Suzuki O."/>
            <person name="Nakagawa S."/>
            <person name="Senoh A."/>
            <person name="Mizoguchi H."/>
            <person name="Goto Y."/>
            <person name="Shimizu F."/>
            <person name="Wakebe H."/>
            <person name="Hishigaki H."/>
            <person name="Watanabe T."/>
            <person name="Sugiyama A."/>
            <person name="Takemoto M."/>
            <person name="Kawakami B."/>
            <person name="Yamazaki M."/>
            <person name="Watanabe K."/>
            <person name="Kumagai A."/>
            <person name="Itakura S."/>
            <person name="Fukuzumi Y."/>
            <person name="Fujimori Y."/>
            <person name="Komiyama M."/>
            <person name="Tashiro H."/>
            <person name="Tanigami A."/>
            <person name="Fujiwara T."/>
            <person name="Ono T."/>
            <person name="Yamada K."/>
            <person name="Fujii Y."/>
            <person name="Ozaki K."/>
            <person name="Hirao M."/>
            <person name="Ohmori Y."/>
            <person name="Kawabata A."/>
            <person name="Hikiji T."/>
            <person name="Kobatake N."/>
            <person name="Inagaki H."/>
            <person name="Ikema Y."/>
            <person name="Okamoto S."/>
            <person name="Okitani R."/>
            <person name="Kawakami T."/>
            <person name="Noguchi S."/>
            <person name="Itoh T."/>
            <person name="Shigeta K."/>
            <person name="Senba T."/>
            <person name="Matsumura K."/>
            <person name="Nakajima Y."/>
            <person name="Mizuno T."/>
            <person name="Morinaga M."/>
            <person name="Sasaki M."/>
            <person name="Togashi T."/>
            <person name="Oyama M."/>
            <person name="Hata H."/>
            <person name="Watanabe M."/>
            <person name="Komatsu T."/>
            <person name="Mizushima-Sugano J."/>
            <person name="Satoh T."/>
            <person name="Shirai Y."/>
            <person name="Takahashi Y."/>
            <person name="Nakagawa K."/>
            <person name="Okumura K."/>
            <person name="Nagase T."/>
            <person name="Nomura N."/>
            <person name="Kikuchi H."/>
            <person name="Masuho Y."/>
            <person name="Yamashita R."/>
            <person name="Nakai K."/>
            <person name="Yada T."/>
            <person name="Nakamura Y."/>
            <person name="Ohara O."/>
            <person name="Isogai T."/>
            <person name="Sugano S."/>
        </authorList>
    </citation>
    <scope>NUCLEOTIDE SEQUENCE [LARGE SCALE MRNA] (ISOFORM 2)</scope>
</reference>
<reference key="3">
    <citation type="journal article" date="2004" name="Genome Res.">
        <title>The status, quality, and expansion of the NIH full-length cDNA project: the Mammalian Gene Collection (MGC).</title>
        <authorList>
            <consortium name="The MGC Project Team"/>
        </authorList>
    </citation>
    <scope>NUCLEOTIDE SEQUENCE [LARGE SCALE MRNA] (ISOFORM 2)</scope>
    <source>
        <tissue>Brain</tissue>
    </source>
</reference>
<reference key="4">
    <citation type="journal article" date="2002" name="J. Biol. Chem.">
        <title>Interaction between tyrosine kinase Etk and a RUN-domain and FYVE-domain containing protein RUFY1. A possible role of Etk in regulation of vesicle trafficking.</title>
        <authorList>
            <person name="Yang J."/>
            <person name="Kim O."/>
            <person name="Wu J."/>
            <person name="Qiu Y."/>
        </authorList>
    </citation>
    <scope>NUCLEOTIDE SEQUENCE [MRNA] OF 7-708 (ISOFORM 1)</scope>
    <scope>TISSUE SPECIFICITY</scope>
    <scope>SUBCELLULAR LOCATION</scope>
    <scope>INTERACTION WITH BMX</scope>
    <scope>PHOSPHORYLATION AT TYR-389 AND TYR-400</scope>
    <scope>MUTAGENESIS OF TYR-389 AND TYR-400</scope>
</reference>
<reference key="5">
    <citation type="submission" date="2005-03" db="EMBL/GenBank/DDBJ databases">
        <authorList>
            <person name="Totoki Y."/>
            <person name="Toyoda A."/>
            <person name="Takeda T."/>
            <person name="Sakaki Y."/>
            <person name="Tanaka A."/>
            <person name="Yokoyama S."/>
            <person name="Ohara O."/>
            <person name="Nagase T."/>
            <person name="Kikuno R.F."/>
        </authorList>
    </citation>
    <scope>NUCLEOTIDE SEQUENCE [LARGE SCALE MRNA] OF 90-708 (ISOFORM 3)</scope>
    <source>
        <tissue>Brain</tissue>
    </source>
</reference>
<reference key="6">
    <citation type="journal article" date="2009" name="Proteins">
        <title>Membrane insertion of the FYVE domain is modulated by pH.</title>
        <authorList>
            <person name="He J."/>
            <person name="Vora M."/>
            <person name="Haney R.M."/>
            <person name="Filonov G.S."/>
            <person name="Musselman C.A."/>
            <person name="Burd C.G."/>
            <person name="Kutateladze A.G."/>
            <person name="Verkhusha V.V."/>
            <person name="Stahelin R.V."/>
            <person name="Kutateladze T.G."/>
        </authorList>
    </citation>
    <scope>DOMAIN FYVE-TYPE ZINC-FINGER</scope>
</reference>
<reference key="7">
    <citation type="journal article" date="2010" name="Mol. Biol. Cell">
        <title>Functional cross-talk between Rab14 and Rab4 through a dual effector, RUFY1/Rabip4.</title>
        <authorList>
            <person name="Yamamoto H."/>
            <person name="Koga H."/>
            <person name="Katoh Y."/>
            <person name="Takahashi S."/>
            <person name="Nakayama K."/>
            <person name="Shin H.W."/>
        </authorList>
    </citation>
    <scope>FUNCTION</scope>
    <scope>SUBCELLULAR LOCATION</scope>
    <scope>INTERACTION WITH RAB4B AND RAB14</scope>
    <scope>MUTAGENESIS OF GLN-67</scope>
</reference>
<reference key="8">
    <citation type="journal article" date="2011" name="BMC Syst. Biol.">
        <title>Initial characterization of the human central proteome.</title>
        <authorList>
            <person name="Burkard T.R."/>
            <person name="Planyavsky M."/>
            <person name="Kaupe I."/>
            <person name="Breitwieser F.P."/>
            <person name="Buerckstuemmer T."/>
            <person name="Bennett K.L."/>
            <person name="Superti-Furga G."/>
            <person name="Colinge J."/>
        </authorList>
    </citation>
    <scope>IDENTIFICATION BY MASS SPECTROMETRY [LARGE SCALE ANALYSIS]</scope>
</reference>
<reference key="9">
    <citation type="journal article" date="2014" name="J. Proteomics">
        <title>An enzyme assisted RP-RPLC approach for in-depth analysis of human liver phosphoproteome.</title>
        <authorList>
            <person name="Bian Y."/>
            <person name="Song C."/>
            <person name="Cheng K."/>
            <person name="Dong M."/>
            <person name="Wang F."/>
            <person name="Huang J."/>
            <person name="Sun D."/>
            <person name="Wang L."/>
            <person name="Ye M."/>
            <person name="Zou H."/>
        </authorList>
    </citation>
    <scope>PHOSPHORYLATION [LARGE SCALE ANALYSIS] AT SER-620</scope>
    <scope>IDENTIFICATION BY MASS SPECTROMETRY [LARGE SCALE ANALYSIS]</scope>
    <source>
        <tissue>Liver</tissue>
    </source>
</reference>
<reference key="10">
    <citation type="journal article" date="2015" name="Proteomics">
        <title>N-terminome analysis of the human mitochondrial proteome.</title>
        <authorList>
            <person name="Vaca Jacome A.S."/>
            <person name="Rabilloud T."/>
            <person name="Schaeffer-Reiss C."/>
            <person name="Rompais M."/>
            <person name="Ayoub D."/>
            <person name="Lane L."/>
            <person name="Bairoch A."/>
            <person name="Van Dorsselaer A."/>
            <person name="Carapito C."/>
        </authorList>
    </citation>
    <scope>IDENTIFICATION BY MASS SPECTROMETRY [LARGE SCALE ANALYSIS]</scope>
</reference>
<reference key="11">
    <citation type="journal article" date="2023" name="J. Cell Biol.">
        <title>RUFY1 binds Arl8b and mediates endosome-to-TGN CI-M6PR retrieval for cargo sorting to lysosomes.</title>
        <authorList>
            <person name="Rawat S."/>
            <person name="Chatterjee D."/>
            <person name="Marwaha R."/>
            <person name="Charak G."/>
            <person name="Kumar G."/>
            <person name="Shaw S."/>
            <person name="Khatter D."/>
            <person name="Sharma S."/>
            <person name="de Heus C."/>
            <person name="Liv N."/>
            <person name="Klumperman J."/>
            <person name="Tuli A."/>
            <person name="Sharma M."/>
        </authorList>
    </citation>
    <scope>FUNCTION</scope>
    <scope>SUBCELLULAR LOCATION</scope>
    <scope>INTERACTION WITH ARL8B</scope>
</reference>
<reference key="12">
    <citation type="submission" date="2007-10" db="PDB data bank">
        <title>Solution structure of the FYVE domain in zinc finger FYVE domain-containing protein 12.</title>
        <authorList>
            <consortium name="RIKEN structural genomics initiative (RSGI)"/>
        </authorList>
    </citation>
    <scope>STRUCTURE BY NMR OF 627-708</scope>
</reference>
<reference key="13">
    <citation type="journal article" date="2006" name="Science">
        <title>The consensus coding sequences of human breast and colorectal cancers.</title>
        <authorList>
            <person name="Sjoeblom T."/>
            <person name="Jones S."/>
            <person name="Wood L.D."/>
            <person name="Parsons D.W."/>
            <person name="Lin J."/>
            <person name="Barber T.D."/>
            <person name="Mandelker D."/>
            <person name="Leary R.J."/>
            <person name="Ptak J."/>
            <person name="Silliman N."/>
            <person name="Szabo S."/>
            <person name="Buckhaults P."/>
            <person name="Farrell C."/>
            <person name="Meeh P."/>
            <person name="Markowitz S.D."/>
            <person name="Willis J."/>
            <person name="Dawson D."/>
            <person name="Willson J.K.V."/>
            <person name="Gazdar A.F."/>
            <person name="Hartigan J."/>
            <person name="Wu L."/>
            <person name="Liu C."/>
            <person name="Parmigiani G."/>
            <person name="Park B.H."/>
            <person name="Bachman K.E."/>
            <person name="Papadopoulos N."/>
            <person name="Vogelstein B."/>
            <person name="Kinzler K.W."/>
            <person name="Velculescu V.E."/>
        </authorList>
    </citation>
    <scope>VARIANT [LARGE SCALE ANALYSIS] PHE-267</scope>
</reference>
<dbReference type="EMBL" id="AF312367">
    <property type="protein sequence ID" value="AAQ14554.1"/>
    <property type="molecule type" value="mRNA"/>
</dbReference>
<dbReference type="EMBL" id="AK025904">
    <property type="protein sequence ID" value="BAB15276.1"/>
    <property type="status" value="ALT_INIT"/>
    <property type="molecule type" value="mRNA"/>
</dbReference>
<dbReference type="EMBL" id="AK075021">
    <property type="status" value="NOT_ANNOTATED_CDS"/>
    <property type="molecule type" value="mRNA"/>
</dbReference>
<dbReference type="EMBL" id="BC032571">
    <property type="protein sequence ID" value="AAH32571.1"/>
    <property type="molecule type" value="mRNA"/>
</dbReference>
<dbReference type="EMBL" id="AF361055">
    <property type="protein sequence ID" value="AAK50771.1"/>
    <property type="status" value="ALT_FRAME"/>
    <property type="molecule type" value="mRNA"/>
</dbReference>
<dbReference type="EMBL" id="AB209507">
    <property type="protein sequence ID" value="BAD92744.1"/>
    <property type="molecule type" value="mRNA"/>
</dbReference>
<dbReference type="CCDS" id="CCDS34312.1">
    <molecule id="Q96T51-2"/>
</dbReference>
<dbReference type="CCDS" id="CCDS4445.2">
    <molecule id="Q96T51-1"/>
</dbReference>
<dbReference type="RefSeq" id="NP_001035541.1">
    <molecule id="Q96T51-2"/>
    <property type="nucleotide sequence ID" value="NM_001040451.3"/>
</dbReference>
<dbReference type="RefSeq" id="NP_001035542.1">
    <molecule id="Q96T51-2"/>
    <property type="nucleotide sequence ID" value="NM_001040452.3"/>
</dbReference>
<dbReference type="RefSeq" id="NP_079434.3">
    <molecule id="Q96T51-1"/>
    <property type="nucleotide sequence ID" value="NM_025158.4"/>
</dbReference>
<dbReference type="RefSeq" id="XP_016865384.1">
    <property type="nucleotide sequence ID" value="XM_017009895.1"/>
</dbReference>
<dbReference type="RefSeq" id="XP_047273733.1">
    <molecule id="Q96T51-2"/>
    <property type="nucleotide sequence ID" value="XM_047417777.1"/>
</dbReference>
<dbReference type="RefSeq" id="XP_047273736.1">
    <molecule id="Q96T51-3"/>
    <property type="nucleotide sequence ID" value="XM_047417780.1"/>
</dbReference>
<dbReference type="RefSeq" id="XP_054187978.1">
    <molecule id="Q96T51-2"/>
    <property type="nucleotide sequence ID" value="XM_054332003.1"/>
</dbReference>
<dbReference type="RefSeq" id="XP_054187984.1">
    <molecule id="Q96T51-3"/>
    <property type="nucleotide sequence ID" value="XM_054332009.1"/>
</dbReference>
<dbReference type="RefSeq" id="XP_054209534.1">
    <molecule id="Q96T51-2"/>
    <property type="nucleotide sequence ID" value="XM_054353559.1"/>
</dbReference>
<dbReference type="RefSeq" id="XP_054209540.1">
    <molecule id="Q96T51-3"/>
    <property type="nucleotide sequence ID" value="XM_054353565.1"/>
</dbReference>
<dbReference type="PDB" id="2YQM">
    <property type="method" value="NMR"/>
    <property type="chains" value="A=627-708"/>
</dbReference>
<dbReference type="PDB" id="2YW8">
    <property type="method" value="X-ray"/>
    <property type="resolution" value="3.00 A"/>
    <property type="chains" value="A=627-708"/>
</dbReference>
<dbReference type="PDBsum" id="2YQM"/>
<dbReference type="PDBsum" id="2YW8"/>
<dbReference type="SMR" id="Q96T51"/>
<dbReference type="BioGRID" id="123193">
    <property type="interactions" value="482"/>
</dbReference>
<dbReference type="FunCoup" id="Q96T51">
    <property type="interactions" value="4567"/>
</dbReference>
<dbReference type="IntAct" id="Q96T51">
    <property type="interactions" value="61"/>
</dbReference>
<dbReference type="MINT" id="Q96T51"/>
<dbReference type="STRING" id="9606.ENSP00000325594"/>
<dbReference type="GlyGen" id="Q96T51">
    <property type="glycosylation" value="1 site, 1 O-linked glycan (1 site)"/>
</dbReference>
<dbReference type="iPTMnet" id="Q96T51"/>
<dbReference type="MetOSite" id="Q96T51"/>
<dbReference type="PhosphoSitePlus" id="Q96T51"/>
<dbReference type="SwissPalm" id="Q96T51"/>
<dbReference type="BioMuta" id="RUFY1"/>
<dbReference type="DMDM" id="110282993"/>
<dbReference type="jPOST" id="Q96T51"/>
<dbReference type="MassIVE" id="Q96T51"/>
<dbReference type="PaxDb" id="9606-ENSP00000325594"/>
<dbReference type="PeptideAtlas" id="Q96T51"/>
<dbReference type="ProteomicsDB" id="78184">
    <molecule id="Q96T51-1"/>
</dbReference>
<dbReference type="ProteomicsDB" id="78185">
    <molecule id="Q96T51-2"/>
</dbReference>
<dbReference type="ProteomicsDB" id="78186">
    <molecule id="Q96T51-3"/>
</dbReference>
<dbReference type="Pumba" id="Q96T51"/>
<dbReference type="Antibodypedia" id="29480">
    <property type="antibodies" value="222 antibodies from 31 providers"/>
</dbReference>
<dbReference type="DNASU" id="80230"/>
<dbReference type="Ensembl" id="ENST00000319449.9">
    <molecule id="Q96T51-1"/>
    <property type="protein sequence ID" value="ENSP00000325594.4"/>
    <property type="gene ID" value="ENSG00000176783.15"/>
</dbReference>
<dbReference type="Ensembl" id="ENST00000393438.6">
    <molecule id="Q96T51-2"/>
    <property type="protein sequence ID" value="ENSP00000377087.2"/>
    <property type="gene ID" value="ENSG00000176783.15"/>
</dbReference>
<dbReference type="Ensembl" id="ENST00000437570.6">
    <molecule id="Q96T51-2"/>
    <property type="protein sequence ID" value="ENSP00000390025.2"/>
    <property type="gene ID" value="ENSG00000176783.15"/>
</dbReference>
<dbReference type="Ensembl" id="ENST00000639102.1">
    <molecule id="Q96T51-2"/>
    <property type="protein sequence ID" value="ENSP00000491803.1"/>
    <property type="gene ID" value="ENSG00000284260.2"/>
</dbReference>
<dbReference type="Ensembl" id="ENST00000639436.1">
    <molecule id="Q96T51-2"/>
    <property type="protein sequence ID" value="ENSP00000491925.1"/>
    <property type="gene ID" value="ENSG00000284260.2"/>
</dbReference>
<dbReference type="Ensembl" id="ENST00000639909.2">
    <molecule id="Q96T51-1"/>
    <property type="protein sequence ID" value="ENSP00000492748.1"/>
    <property type="gene ID" value="ENSG00000284260.2"/>
</dbReference>
<dbReference type="GeneID" id="80230"/>
<dbReference type="KEGG" id="hsa:80230"/>
<dbReference type="MANE-Select" id="ENST00000319449.9">
    <property type="protein sequence ID" value="ENSP00000325594.4"/>
    <property type="RefSeq nucleotide sequence ID" value="NM_025158.5"/>
    <property type="RefSeq protein sequence ID" value="NP_079434.3"/>
</dbReference>
<dbReference type="UCSC" id="uc003mka.3">
    <molecule id="Q96T51-1"/>
    <property type="organism name" value="human"/>
</dbReference>
<dbReference type="AGR" id="HGNC:19760"/>
<dbReference type="CTD" id="80230"/>
<dbReference type="DisGeNET" id="80230"/>
<dbReference type="GeneCards" id="RUFY1"/>
<dbReference type="HGNC" id="HGNC:19760">
    <property type="gene designation" value="RUFY1"/>
</dbReference>
<dbReference type="HPA" id="ENSG00000176783">
    <property type="expression patterns" value="Low tissue specificity"/>
</dbReference>
<dbReference type="MIM" id="610327">
    <property type="type" value="gene"/>
</dbReference>
<dbReference type="neXtProt" id="NX_Q96T51"/>
<dbReference type="OpenTargets" id="ENSG00000176783"/>
<dbReference type="PharmGKB" id="PA134944787"/>
<dbReference type="VEuPathDB" id="HostDB:ENSG00000176783"/>
<dbReference type="eggNOG" id="KOG1729">
    <property type="taxonomic scope" value="Eukaryota"/>
</dbReference>
<dbReference type="eggNOG" id="KOG4381">
    <property type="taxonomic scope" value="Eukaryota"/>
</dbReference>
<dbReference type="GeneTree" id="ENSGT00940000158334"/>
<dbReference type="HOGENOM" id="CLU_014576_3_0_1"/>
<dbReference type="InParanoid" id="Q96T51"/>
<dbReference type="OMA" id="THCKQCK"/>
<dbReference type="OrthoDB" id="79871at2759"/>
<dbReference type="PAN-GO" id="Q96T51">
    <property type="GO annotations" value="4 GO annotations based on evolutionary models"/>
</dbReference>
<dbReference type="PhylomeDB" id="Q96T51"/>
<dbReference type="TreeFam" id="TF323904"/>
<dbReference type="PathwayCommons" id="Q96T51"/>
<dbReference type="Reactome" id="R-HSA-1660499">
    <property type="pathway name" value="Synthesis of PIPs at the plasma membrane"/>
</dbReference>
<dbReference type="SignaLink" id="Q96T51"/>
<dbReference type="SIGNOR" id="Q96T51"/>
<dbReference type="BioGRID-ORCS" id="80230">
    <property type="hits" value="12 hits in 1153 CRISPR screens"/>
</dbReference>
<dbReference type="ChiTaRS" id="RUFY1">
    <property type="organism name" value="human"/>
</dbReference>
<dbReference type="EvolutionaryTrace" id="Q96T51"/>
<dbReference type="GeneWiki" id="RUFY1"/>
<dbReference type="GenomeRNAi" id="80230"/>
<dbReference type="Pharos" id="Q96T51">
    <property type="development level" value="Tbio"/>
</dbReference>
<dbReference type="PRO" id="PR:Q96T51"/>
<dbReference type="Proteomes" id="UP000005640">
    <property type="component" value="Chromosome 5"/>
</dbReference>
<dbReference type="RNAct" id="Q96T51">
    <property type="molecule type" value="protein"/>
</dbReference>
<dbReference type="Bgee" id="ENSG00000176783">
    <property type="expression patterns" value="Expressed in monocyte and 97 other cell types or tissues"/>
</dbReference>
<dbReference type="ExpressionAtlas" id="Q96T51">
    <property type="expression patterns" value="baseline and differential"/>
</dbReference>
<dbReference type="GO" id="GO:0005737">
    <property type="term" value="C:cytoplasm"/>
    <property type="evidence" value="ECO:0000318"/>
    <property type="project" value="GO_Central"/>
</dbReference>
<dbReference type="GO" id="GO:0005829">
    <property type="term" value="C:cytosol"/>
    <property type="evidence" value="ECO:0000314"/>
    <property type="project" value="HPA"/>
</dbReference>
<dbReference type="GO" id="GO:0031901">
    <property type="term" value="C:early endosome membrane"/>
    <property type="evidence" value="ECO:0000314"/>
    <property type="project" value="UniProt"/>
</dbReference>
<dbReference type="GO" id="GO:0005768">
    <property type="term" value="C:endosome"/>
    <property type="evidence" value="ECO:0000314"/>
    <property type="project" value="UniProtKB"/>
</dbReference>
<dbReference type="GO" id="GO:0043231">
    <property type="term" value="C:intracellular membrane-bounded organelle"/>
    <property type="evidence" value="ECO:0000314"/>
    <property type="project" value="HPA"/>
</dbReference>
<dbReference type="GO" id="GO:0016607">
    <property type="term" value="C:nuclear speck"/>
    <property type="evidence" value="ECO:0000314"/>
    <property type="project" value="HPA"/>
</dbReference>
<dbReference type="GO" id="GO:0042802">
    <property type="term" value="F:identical protein binding"/>
    <property type="evidence" value="ECO:0000353"/>
    <property type="project" value="IntAct"/>
</dbReference>
<dbReference type="GO" id="GO:0008289">
    <property type="term" value="F:lipid binding"/>
    <property type="evidence" value="ECO:0007669"/>
    <property type="project" value="UniProtKB-KW"/>
</dbReference>
<dbReference type="GO" id="GO:0030674">
    <property type="term" value="F:protein-macromolecule adaptor activity"/>
    <property type="evidence" value="ECO:0000314"/>
    <property type="project" value="UniProt"/>
</dbReference>
<dbReference type="GO" id="GO:0042169">
    <property type="term" value="F:SH2 domain binding"/>
    <property type="evidence" value="ECO:0000353"/>
    <property type="project" value="UniProtKB"/>
</dbReference>
<dbReference type="GO" id="GO:0017124">
    <property type="term" value="F:SH3 domain binding"/>
    <property type="evidence" value="ECO:0000353"/>
    <property type="project" value="UniProtKB"/>
</dbReference>
<dbReference type="GO" id="GO:0008270">
    <property type="term" value="F:zinc ion binding"/>
    <property type="evidence" value="ECO:0007669"/>
    <property type="project" value="UniProtKB-KW"/>
</dbReference>
<dbReference type="GO" id="GO:0034498">
    <property type="term" value="P:early endosome to Golgi transport"/>
    <property type="evidence" value="ECO:0000314"/>
    <property type="project" value="UniProt"/>
</dbReference>
<dbReference type="GO" id="GO:0006897">
    <property type="term" value="P:endocytosis"/>
    <property type="evidence" value="ECO:0007669"/>
    <property type="project" value="UniProtKB-KW"/>
</dbReference>
<dbReference type="GO" id="GO:0034058">
    <property type="term" value="P:endosomal vesicle fusion"/>
    <property type="evidence" value="ECO:0000314"/>
    <property type="project" value="UniProt"/>
</dbReference>
<dbReference type="GO" id="GO:0015031">
    <property type="term" value="P:protein transport"/>
    <property type="evidence" value="ECO:0000318"/>
    <property type="project" value="GO_Central"/>
</dbReference>
<dbReference type="GO" id="GO:0030100">
    <property type="term" value="P:regulation of endocytosis"/>
    <property type="evidence" value="ECO:0000353"/>
    <property type="project" value="UniProtKB"/>
</dbReference>
<dbReference type="GO" id="GO:0007264">
    <property type="term" value="P:small GTPase-mediated signal transduction"/>
    <property type="evidence" value="ECO:0007669"/>
    <property type="project" value="Ensembl"/>
</dbReference>
<dbReference type="CDD" id="cd15758">
    <property type="entry name" value="FYVE_RUFY1"/>
    <property type="match status" value="1"/>
</dbReference>
<dbReference type="CDD" id="cd17694">
    <property type="entry name" value="RUN_RUFY1"/>
    <property type="match status" value="1"/>
</dbReference>
<dbReference type="FunFam" id="1.20.58.900:FF:000001">
    <property type="entry name" value="RUN and FYVE domain containing 2"/>
    <property type="match status" value="1"/>
</dbReference>
<dbReference type="FunFam" id="3.30.40.10:FF:000046">
    <property type="entry name" value="RUN and FYVE domain containing 2"/>
    <property type="match status" value="1"/>
</dbReference>
<dbReference type="FunFam" id="1.20.5.170:FF:000013">
    <property type="entry name" value="RUN and FYVE domain-containing 1"/>
    <property type="match status" value="1"/>
</dbReference>
<dbReference type="Gene3D" id="1.20.5.170">
    <property type="match status" value="1"/>
</dbReference>
<dbReference type="Gene3D" id="1.20.58.900">
    <property type="match status" value="1"/>
</dbReference>
<dbReference type="Gene3D" id="3.30.40.10">
    <property type="entry name" value="Zinc/RING finger domain, C3HC4 (zinc finger)"/>
    <property type="match status" value="1"/>
</dbReference>
<dbReference type="InterPro" id="IPR047331">
    <property type="entry name" value="FYVE_RUFY1"/>
</dbReference>
<dbReference type="InterPro" id="IPR047335">
    <property type="entry name" value="RUFY1-3"/>
</dbReference>
<dbReference type="InterPro" id="IPR004012">
    <property type="entry name" value="Run_dom"/>
</dbReference>
<dbReference type="InterPro" id="IPR037213">
    <property type="entry name" value="Run_dom_sf"/>
</dbReference>
<dbReference type="InterPro" id="IPR047330">
    <property type="entry name" value="RUN_RUFY1"/>
</dbReference>
<dbReference type="InterPro" id="IPR000306">
    <property type="entry name" value="Znf_FYVE"/>
</dbReference>
<dbReference type="InterPro" id="IPR017455">
    <property type="entry name" value="Znf_FYVE-rel"/>
</dbReference>
<dbReference type="InterPro" id="IPR011011">
    <property type="entry name" value="Znf_FYVE_PHD"/>
</dbReference>
<dbReference type="InterPro" id="IPR001841">
    <property type="entry name" value="Znf_RING"/>
</dbReference>
<dbReference type="InterPro" id="IPR013083">
    <property type="entry name" value="Znf_RING/FYVE/PHD"/>
</dbReference>
<dbReference type="PANTHER" id="PTHR45956:SF4">
    <property type="entry name" value="RUN AND FYVE DOMAIN-CONTAINING PROTEIN 1"/>
    <property type="match status" value="1"/>
</dbReference>
<dbReference type="PANTHER" id="PTHR45956">
    <property type="entry name" value="RUN AND FYVE DOMAIN-CONTAINING PROTEIN 2-LIKE PROTEIN"/>
    <property type="match status" value="1"/>
</dbReference>
<dbReference type="Pfam" id="PF01363">
    <property type="entry name" value="FYVE"/>
    <property type="match status" value="1"/>
</dbReference>
<dbReference type="Pfam" id="PF02759">
    <property type="entry name" value="RUN"/>
    <property type="match status" value="1"/>
</dbReference>
<dbReference type="SMART" id="SM00064">
    <property type="entry name" value="FYVE"/>
    <property type="match status" value="1"/>
</dbReference>
<dbReference type="SMART" id="SM00593">
    <property type="entry name" value="RUN"/>
    <property type="match status" value="1"/>
</dbReference>
<dbReference type="SUPFAM" id="SSF57903">
    <property type="entry name" value="FYVE/PHD zinc finger"/>
    <property type="match status" value="1"/>
</dbReference>
<dbReference type="SUPFAM" id="SSF140741">
    <property type="entry name" value="RUN domain-like"/>
    <property type="match status" value="1"/>
</dbReference>
<dbReference type="PROSITE" id="PS50826">
    <property type="entry name" value="RUN"/>
    <property type="match status" value="1"/>
</dbReference>
<dbReference type="PROSITE" id="PS50178">
    <property type="entry name" value="ZF_FYVE"/>
    <property type="match status" value="1"/>
</dbReference>
<protein>
    <recommendedName>
        <fullName evidence="15">RUN and FYVE domain-containing protein 1</fullName>
    </recommendedName>
    <alternativeName>
        <fullName>FYVE-finger protein EIP1</fullName>
    </alternativeName>
    <alternativeName>
        <fullName>La-binding protein 1</fullName>
    </alternativeName>
    <alternativeName>
        <fullName>Rab4-interacting protein</fullName>
    </alternativeName>
    <alternativeName>
        <fullName>Zinc finger FYVE domain-containing protein 12</fullName>
    </alternativeName>
</protein>
<comment type="function">
    <text evidence="1 7 10 11">Activating adapter involved in cargo sorting from early/recycling endosomes. Regulates retrieval of proteins from endosomes to the trans-Golgi network through interaction with the dynein-dynactin complex (PubMed:36282215). Dual effector of RAB4B and RAB14, mediates a cooperative interaction allowing endosomal tethering and fusion (PubMed:20534812). Binds phospholipid vesicles containing phosphatidylinositol 3-phosphate and participates in early endosomal trafficking (PubMed:14617813). In oocytes, self-assembles to form a protein matrix which hold together endolysosomes, autophagosomes and proteasomes and generate non-membrane-bound compartments called endo-lysosomal vesicular assemblies (ELVAs). In immature oocytes, ELVAs sequester ubiquitinated protein aggregates and degrade them upon oocyte maturation (By similarity).</text>
</comment>
<comment type="subunit">
    <text evidence="1 6 7 10 11">Self-assembles through coiled coil domains to drive ELVA (endo-lysosomal vesicular assembly) formation (By similarity). Interacts with BMX. May interact with SSB. Interacts with RAB4 and RAB5 that have been activated by GTP-binding. Interacts WITH RAB14 and RAB4B (GTP-bound form); the interactions allow endosomal tethering and fusion (PubMed:20534812). Interacts with ARL8B (GTP-bound form); the interaction is required for RUFY1 endosomal location and promotes interaction with RAB14 (PubMed:36282215).</text>
</comment>
<comment type="interaction">
    <interactant intactId="EBI-3941207">
        <id>Q96T51</id>
    </interactant>
    <interactant intactId="EBI-348555">
        <id>O75928</id>
        <label>PIAS2</label>
    </interactant>
    <organismsDiffer>false</organismsDiffer>
    <experiments>3</experiments>
</comment>
<comment type="interaction">
    <interactant intactId="EBI-3941207">
        <id>Q96T51</id>
    </interactant>
    <interactant intactId="EBI-9089467">
        <id>Q96DA2</id>
        <label>RAB39B</label>
    </interactant>
    <organismsDiffer>false</organismsDiffer>
    <experiments>4</experiments>
</comment>
<comment type="interaction">
    <interactant intactId="EBI-3941207">
        <id>Q96T51</id>
    </interactant>
    <interactant intactId="EBI-747844">
        <id>Q96QF0</id>
        <label>RAB3IP</label>
    </interactant>
    <organismsDiffer>false</organismsDiffer>
    <experiments>3</experiments>
</comment>
<comment type="interaction">
    <interactant intactId="EBI-3941207">
        <id>Q96T51</id>
    </interactant>
    <interactant intactId="EBI-1055906">
        <id>Q9BRA2</id>
        <label>TXNDC17</label>
    </interactant>
    <organismsDiffer>false</organismsDiffer>
    <experiments>3</experiments>
</comment>
<comment type="interaction">
    <interactant intactId="EBI-3941207">
        <id>Q96T51</id>
    </interactant>
    <interactant intactId="EBI-747711">
        <id>Q68CQ4</id>
        <label>UTP25</label>
    </interactant>
    <organismsDiffer>false</organismsDiffer>
    <experiments>5</experiments>
</comment>
<comment type="interaction">
    <interactant intactId="EBI-12192715">
        <id>Q96T51-2</id>
    </interactant>
    <interactant intactId="EBI-12081862">
        <id>P00973-2</id>
        <label>OAS1</label>
    </interactant>
    <organismsDiffer>false</organismsDiffer>
    <experiments>3</experiments>
</comment>
<comment type="interaction">
    <interactant intactId="EBI-12192715">
        <id>Q96T51-2</id>
    </interactant>
    <interactant intactId="EBI-9088146">
        <id>Q9H714-3</id>
        <label>RUBCNL</label>
    </interactant>
    <organismsDiffer>false</organismsDiffer>
    <experiments>2</experiments>
</comment>
<comment type="interaction">
    <interactant intactId="EBI-12192715">
        <id>Q96T51-2</id>
    </interactant>
    <interactant intactId="EBI-12192715">
        <id>Q96T51-2</id>
        <label>RUFY1</label>
    </interactant>
    <organismsDiffer>false</organismsDiffer>
    <experiments>5</experiments>
</comment>
<comment type="interaction">
    <interactant intactId="EBI-12192715">
        <id>Q96T51-2</id>
    </interactant>
    <interactant intactId="EBI-740098">
        <id>P36406</id>
        <label>TRIM23</label>
    </interactant>
    <organismsDiffer>false</organismsDiffer>
    <experiments>3</experiments>
</comment>
<comment type="interaction">
    <interactant intactId="EBI-12192715">
        <id>Q96T51-2</id>
    </interactant>
    <interactant intactId="EBI-747711">
        <id>Q68CQ4</id>
        <label>UTP25</label>
    </interactant>
    <organismsDiffer>false</organismsDiffer>
    <experiments>6</experiments>
</comment>
<comment type="subcellular location">
    <subcellularLocation>
        <location evidence="10 11">Early endosome membrane</location>
        <topology evidence="10">Peripheral membrane protein</topology>
    </subcellularLocation>
    <text evidence="1">In oocytes, localizes in non-membrane-bound compartments called endo-lysosomal vesicular assemblies (ELVAs).</text>
</comment>
<comment type="alternative products">
    <event type="alternative splicing"/>
    <isoform>
        <id>Q96T51-1</id>
        <name>1</name>
        <name>rabip4'</name>
        <sequence type="displayed"/>
    </isoform>
    <isoform>
        <id>Q96T51-2</id>
        <name>2</name>
        <name>rabip4</name>
        <sequence type="described" ref="VSP_019785"/>
    </isoform>
    <isoform>
        <id>Q96T51-3</id>
        <name>3</name>
        <sequence type="described" ref="VSP_019786 VSP_019787"/>
    </isoform>
</comment>
<comment type="tissue specificity">
    <text evidence="6">Broadly expressed, with highest levels in lung, testis, kidney and brain.</text>
</comment>
<comment type="domain">
    <text evidence="1 9 11">The FYVE-type zinc finger domain mediates interactions with phosphatidylinositol 3-phosphate in membranes of early endosomes and penetrates bilayers. The FYVE domain insertion into PtdIns(3)P-enriched membranes is substantially increased in acidic conditions. The 2 coiled coil domains mediate the interaction with the dynein-dynactin complex, the RUN domain is also involved in the interaction (PubMed:36282215). The coiled coil domains also mediate self-association (By similarity).</text>
</comment>
<comment type="PTM">
    <text evidence="6">Phosphorylation on Tyr-389 and/or Tyr-400 is required for interaction with BMX and endosomal targeting.</text>
</comment>
<comment type="sequence caution" evidence="15">
    <conflict type="frameshift">
        <sequence resource="EMBL-CDS" id="AAK50771"/>
    </conflict>
</comment>
<comment type="sequence caution" evidence="15">
    <conflict type="erroneous initiation">
        <sequence resource="EMBL-CDS" id="BAB15276"/>
    </conflict>
    <text>Truncated N-terminus.</text>
</comment>
<name>RUFY1_HUMAN</name>
<organism>
    <name type="scientific">Homo sapiens</name>
    <name type="common">Human</name>
    <dbReference type="NCBI Taxonomy" id="9606"/>
    <lineage>
        <taxon>Eukaryota</taxon>
        <taxon>Metazoa</taxon>
        <taxon>Chordata</taxon>
        <taxon>Craniata</taxon>
        <taxon>Vertebrata</taxon>
        <taxon>Euteleostomi</taxon>
        <taxon>Mammalia</taxon>
        <taxon>Eutheria</taxon>
        <taxon>Euarchontoglires</taxon>
        <taxon>Primates</taxon>
        <taxon>Haplorrhini</taxon>
        <taxon>Catarrhini</taxon>
        <taxon>Hominidae</taxon>
        <taxon>Homo</taxon>
    </lineage>
</organism>
<evidence type="ECO:0000250" key="1">
    <source>
        <dbReference type="UniProtKB" id="Q8BIJ7"/>
    </source>
</evidence>
<evidence type="ECO:0000255" key="2"/>
<evidence type="ECO:0000255" key="3">
    <source>
        <dbReference type="PROSITE-ProRule" id="PRU00091"/>
    </source>
</evidence>
<evidence type="ECO:0000255" key="4">
    <source>
        <dbReference type="PROSITE-ProRule" id="PRU00178"/>
    </source>
</evidence>
<evidence type="ECO:0000256" key="5">
    <source>
        <dbReference type="SAM" id="MobiDB-lite"/>
    </source>
</evidence>
<evidence type="ECO:0000269" key="6">
    <source>
    </source>
</evidence>
<evidence type="ECO:0000269" key="7">
    <source>
    </source>
</evidence>
<evidence type="ECO:0000269" key="8">
    <source>
    </source>
</evidence>
<evidence type="ECO:0000269" key="9">
    <source>
    </source>
</evidence>
<evidence type="ECO:0000269" key="10">
    <source>
    </source>
</evidence>
<evidence type="ECO:0000269" key="11">
    <source>
    </source>
</evidence>
<evidence type="ECO:0000303" key="12">
    <source>
    </source>
</evidence>
<evidence type="ECO:0000303" key="13">
    <source>
    </source>
</evidence>
<evidence type="ECO:0000303" key="14">
    <source ref="5"/>
</evidence>
<evidence type="ECO:0000305" key="15"/>
<evidence type="ECO:0000312" key="16">
    <source>
        <dbReference type="HGNC" id="HGNC:19760"/>
    </source>
</evidence>
<evidence type="ECO:0007744" key="17">
    <source>
    </source>
</evidence>
<evidence type="ECO:0007829" key="18">
    <source>
        <dbReference type="PDB" id="2YQM"/>
    </source>
</evidence>
<evidence type="ECO:0007829" key="19">
    <source>
        <dbReference type="PDB" id="2YW8"/>
    </source>
</evidence>